<keyword id="KW-0507">mRNA processing</keyword>
<keyword id="KW-0508">mRNA splicing</keyword>
<keyword id="KW-1185">Reference proteome</keyword>
<dbReference type="EMBL" id="CU329670">
    <property type="protein sequence ID" value="CCD31345.1"/>
    <property type="molecule type" value="Genomic_DNA"/>
</dbReference>
<dbReference type="RefSeq" id="XP_004001800.1">
    <property type="nucleotide sequence ID" value="XM_004001751.1"/>
</dbReference>
<dbReference type="SASBDB" id="G2TRK8"/>
<dbReference type="SMR" id="G2TRK8"/>
<dbReference type="BioGRID" id="4254414">
    <property type="interactions" value="4"/>
</dbReference>
<dbReference type="ComplexPortal" id="CPX-25739">
    <property type="entry name" value="Survival motor neuron complex"/>
</dbReference>
<dbReference type="FunCoup" id="G2TRK8">
    <property type="interactions" value="1"/>
</dbReference>
<dbReference type="STRING" id="284812.G2TRK8"/>
<dbReference type="PaxDb" id="4896-SPAC4D7.15.1"/>
<dbReference type="EnsemblFungi" id="SPAC4D7.15.1">
    <property type="protein sequence ID" value="SPAC4D7.15.1:pep"/>
    <property type="gene ID" value="SPAC4D7.15"/>
</dbReference>
<dbReference type="PomBase" id="SPAC4D7.15">
    <property type="gene designation" value="gem6"/>
</dbReference>
<dbReference type="VEuPathDB" id="FungiDB:SPAC4D7.15"/>
<dbReference type="HOGENOM" id="CLU_2334840_0_0_1"/>
<dbReference type="InParanoid" id="G2TRK8"/>
<dbReference type="OMA" id="FRNDQIP"/>
<dbReference type="PRO" id="PR:G2TRK8"/>
<dbReference type="Proteomes" id="UP000002485">
    <property type="component" value="Chromosome I"/>
</dbReference>
<dbReference type="GO" id="GO:0032797">
    <property type="term" value="C:SMN complex"/>
    <property type="evidence" value="ECO:0000314"/>
    <property type="project" value="PomBase"/>
</dbReference>
<dbReference type="GO" id="GO:0003723">
    <property type="term" value="F:RNA binding"/>
    <property type="evidence" value="ECO:0007669"/>
    <property type="project" value="InterPro"/>
</dbReference>
<dbReference type="GO" id="GO:0000387">
    <property type="term" value="P:spliceosomal snRNP assembly"/>
    <property type="evidence" value="ECO:0000315"/>
    <property type="project" value="PomBase"/>
</dbReference>
<dbReference type="InterPro" id="IPR047575">
    <property type="entry name" value="Sm"/>
</dbReference>
<dbReference type="PROSITE" id="PS52002">
    <property type="entry name" value="SM"/>
    <property type="match status" value="1"/>
</dbReference>
<reference key="1">
    <citation type="journal article" date="2002" name="Nature">
        <title>The genome sequence of Schizosaccharomyces pombe.</title>
        <authorList>
            <person name="Wood V."/>
            <person name="Gwilliam R."/>
            <person name="Rajandream M.A."/>
            <person name="Lyne M.H."/>
            <person name="Lyne R."/>
            <person name="Stewart A."/>
            <person name="Sgouros J.G."/>
            <person name="Peat N."/>
            <person name="Hayles J."/>
            <person name="Baker S.G."/>
            <person name="Basham D."/>
            <person name="Bowman S."/>
            <person name="Brooks K."/>
            <person name="Brown D."/>
            <person name="Brown S."/>
            <person name="Chillingworth T."/>
            <person name="Churcher C.M."/>
            <person name="Collins M."/>
            <person name="Connor R."/>
            <person name="Cronin A."/>
            <person name="Davis P."/>
            <person name="Feltwell T."/>
            <person name="Fraser A."/>
            <person name="Gentles S."/>
            <person name="Goble A."/>
            <person name="Hamlin N."/>
            <person name="Harris D.E."/>
            <person name="Hidalgo J."/>
            <person name="Hodgson G."/>
            <person name="Holroyd S."/>
            <person name="Hornsby T."/>
            <person name="Howarth S."/>
            <person name="Huckle E.J."/>
            <person name="Hunt S."/>
            <person name="Jagels K."/>
            <person name="James K.D."/>
            <person name="Jones L."/>
            <person name="Jones M."/>
            <person name="Leather S."/>
            <person name="McDonald S."/>
            <person name="McLean J."/>
            <person name="Mooney P."/>
            <person name="Moule S."/>
            <person name="Mungall K.L."/>
            <person name="Murphy L.D."/>
            <person name="Niblett D."/>
            <person name="Odell C."/>
            <person name="Oliver K."/>
            <person name="O'Neil S."/>
            <person name="Pearson D."/>
            <person name="Quail M.A."/>
            <person name="Rabbinowitsch E."/>
            <person name="Rutherford K.M."/>
            <person name="Rutter S."/>
            <person name="Saunders D."/>
            <person name="Seeger K."/>
            <person name="Sharp S."/>
            <person name="Skelton J."/>
            <person name="Simmonds M.N."/>
            <person name="Squares R."/>
            <person name="Squares S."/>
            <person name="Stevens K."/>
            <person name="Taylor K."/>
            <person name="Taylor R.G."/>
            <person name="Tivey A."/>
            <person name="Walsh S.V."/>
            <person name="Warren T."/>
            <person name="Whitehead S."/>
            <person name="Woodward J.R."/>
            <person name="Volckaert G."/>
            <person name="Aert R."/>
            <person name="Robben J."/>
            <person name="Grymonprez B."/>
            <person name="Weltjens I."/>
            <person name="Vanstreels E."/>
            <person name="Rieger M."/>
            <person name="Schaefer M."/>
            <person name="Mueller-Auer S."/>
            <person name="Gabel C."/>
            <person name="Fuchs M."/>
            <person name="Duesterhoeft A."/>
            <person name="Fritzc C."/>
            <person name="Holzer E."/>
            <person name="Moestl D."/>
            <person name="Hilbert H."/>
            <person name="Borzym K."/>
            <person name="Langer I."/>
            <person name="Beck A."/>
            <person name="Lehrach H."/>
            <person name="Reinhardt R."/>
            <person name="Pohl T.M."/>
            <person name="Eger P."/>
            <person name="Zimmermann W."/>
            <person name="Wedler H."/>
            <person name="Wambutt R."/>
            <person name="Purnelle B."/>
            <person name="Goffeau A."/>
            <person name="Cadieu E."/>
            <person name="Dreano S."/>
            <person name="Gloux S."/>
            <person name="Lelaure V."/>
            <person name="Mottier S."/>
            <person name="Galibert F."/>
            <person name="Aves S.J."/>
            <person name="Xiang Z."/>
            <person name="Hunt C."/>
            <person name="Moore K."/>
            <person name="Hurst S.M."/>
            <person name="Lucas M."/>
            <person name="Rochet M."/>
            <person name="Gaillardin C."/>
            <person name="Tallada V.A."/>
            <person name="Garzon A."/>
            <person name="Thode G."/>
            <person name="Daga R.R."/>
            <person name="Cruzado L."/>
            <person name="Jimenez J."/>
            <person name="Sanchez M."/>
            <person name="del Rey F."/>
            <person name="Benito J."/>
            <person name="Dominguez A."/>
            <person name="Revuelta J.L."/>
            <person name="Moreno S."/>
            <person name="Armstrong J."/>
            <person name="Forsburg S.L."/>
            <person name="Cerutti L."/>
            <person name="Lowe T."/>
            <person name="McCombie W.R."/>
            <person name="Paulsen I."/>
            <person name="Potashkin J."/>
            <person name="Shpakovski G.V."/>
            <person name="Ussery D."/>
            <person name="Barrell B.G."/>
            <person name="Nurse P."/>
        </authorList>
    </citation>
    <scope>NUCLEOTIDE SEQUENCE [LARGE SCALE GENOMIC DNA]</scope>
    <source>
        <strain>972 / ATCC 24843</strain>
    </source>
</reference>
<reference key="2">
    <citation type="journal article" date="2011" name="Science">
        <title>Comparative functional genomics of the fission yeasts.</title>
        <authorList>
            <person name="Rhind N."/>
            <person name="Chen Z."/>
            <person name="Yassour M."/>
            <person name="Thompson D.A."/>
            <person name="Haas B.J."/>
            <person name="Habib N."/>
            <person name="Wapinski I."/>
            <person name="Roy S."/>
            <person name="Lin M.F."/>
            <person name="Heiman D.I."/>
            <person name="Young S.K."/>
            <person name="Furuya K."/>
            <person name="Guo Y."/>
            <person name="Pidoux A."/>
            <person name="Chen H.M."/>
            <person name="Robbertse B."/>
            <person name="Goldberg J.M."/>
            <person name="Aoki K."/>
            <person name="Bayne E.H."/>
            <person name="Berlin A.M."/>
            <person name="Desjardins C.A."/>
            <person name="Dobbs E."/>
            <person name="Dukaj L."/>
            <person name="Fan L."/>
            <person name="FitzGerald M.G."/>
            <person name="French C."/>
            <person name="Gujja S."/>
            <person name="Hansen K."/>
            <person name="Keifenheim D."/>
            <person name="Levin J.Z."/>
            <person name="Mosher R.A."/>
            <person name="Mueller C.A."/>
            <person name="Pfiffner J."/>
            <person name="Priest M."/>
            <person name="Russ C."/>
            <person name="Smialowska A."/>
            <person name="Swoboda P."/>
            <person name="Sykes S.M."/>
            <person name="Vaughn M."/>
            <person name="Vengrova S."/>
            <person name="Yoder R."/>
            <person name="Zeng Q."/>
            <person name="Allshire R."/>
            <person name="Baulcombe D."/>
            <person name="Birren B.W."/>
            <person name="Brown W."/>
            <person name="Ekwall K."/>
            <person name="Kellis M."/>
            <person name="Leatherwood J."/>
            <person name="Levin H."/>
            <person name="Margalit H."/>
            <person name="Martienssen R."/>
            <person name="Nieduszynski C.A."/>
            <person name="Spatafora J.W."/>
            <person name="Friedman N."/>
            <person name="Dalgaard J.Z."/>
            <person name="Baumann P."/>
            <person name="Niki H."/>
            <person name="Regev A."/>
            <person name="Nusbaum C."/>
        </authorList>
    </citation>
    <scope>IDENTIFICATION</scope>
</reference>
<reference key="3">
    <citation type="journal article" date="2011" name="Genetics">
        <title>Augmented annotation of the Schizosaccharomyces pombe genome reveals additional genes required for growth and viability.</title>
        <authorList>
            <person name="Bitton D.A."/>
            <person name="Wood V."/>
            <person name="Scutt P.J."/>
            <person name="Grallert A."/>
            <person name="Yates T."/>
            <person name="Smith D.L."/>
            <person name="Hagan I.M."/>
            <person name="Miller C.J."/>
        </authorList>
    </citation>
    <scope>IDENTIFICATION</scope>
</reference>
<reference key="4">
    <citation type="journal article" date="2021" name="Nucleic Acids Res.">
        <title>Identification and structural analysis of the Schizosaccharomyces pombe SMN complex.</title>
        <authorList>
            <person name="Veepaschit J."/>
            <person name="Viswanathan A."/>
            <person name="Bordonne R."/>
            <person name="Grimm C."/>
            <person name="Fischer U."/>
        </authorList>
    </citation>
    <scope>FUNCTION</scope>
    <scope>IDENTIFICATION IN THE CORE SMN COMPLEX</scope>
    <scope>INTERACTION WITH GEM7</scope>
    <scope>DISRUPTION PHENOTYPE</scope>
</reference>
<name>GEMI6_SCHPO</name>
<gene>
    <name evidence="4" type="primary">gem6</name>
    <name evidence="5" type="synonym">new12</name>
    <name evidence="5" type="ORF">SPAC4D7.15</name>
</gene>
<evidence type="ECO:0000250" key="1">
    <source>
        <dbReference type="UniProtKB" id="Q8WXD5"/>
    </source>
</evidence>
<evidence type="ECO:0000255" key="2">
    <source>
        <dbReference type="PROSITE-ProRule" id="PRU01346"/>
    </source>
</evidence>
<evidence type="ECO:0000269" key="3">
    <source>
    </source>
</evidence>
<evidence type="ECO:0000303" key="4">
    <source>
    </source>
</evidence>
<evidence type="ECO:0000312" key="5">
    <source>
        <dbReference type="PomBase" id="SPAC4D7.15"/>
    </source>
</evidence>
<comment type="function">
    <text evidence="1 3">The SMN complex catalyzes the assembly of small nuclear ribonucleoproteins (snRNPs), the building blocks of the spliceosome, and thereby plays an important role in the splicing of cellular pre-mRNAs (PubMed:33754639). Most spliceosomal snRNPs contain a common set of Sm proteins smb1, smd1, smd2, smd3, sme1, smf1 and smg1 that assemble in a heptameric protein ring on the Sm site of the small nuclear RNA to form the core snRNP (Sm core) (By similarity). In the cytosol, the Sm proteins smd1, smd2, sme1, smf1 and smg1 (5Sm) are trapped in an inactive 6S pICln-Sm complex by the chaperone saf5 (By similarity). To complete assembly of core snRNPs, the SMN complex accepts 5Sm from saf5 (By similarity). Binding of snRNA inside 5Sm triggers eviction of the SMN complex, thereby allowing binding of smd3 and smb1 to complete assembly of the core snRNP (By similarity).</text>
</comment>
<comment type="subunit">
    <text evidence="3">Part of the core SMN complex at least composed of smn1, yip11/gem2, gem6, gem7 and gem8 (PubMed:33754639). Interacts with gem7; the interaction is direct (PubMed:33754639).</text>
</comment>
<comment type="disruption phenotype">
    <text evidence="3">Inviable cell population.</text>
</comment>
<proteinExistence type="evidence at transcript level"/>
<accession>G2TRK8</accession>
<organism>
    <name type="scientific">Schizosaccharomyces pombe (strain 972 / ATCC 24843)</name>
    <name type="common">Fission yeast</name>
    <dbReference type="NCBI Taxonomy" id="284812"/>
    <lineage>
        <taxon>Eukaryota</taxon>
        <taxon>Fungi</taxon>
        <taxon>Dikarya</taxon>
        <taxon>Ascomycota</taxon>
        <taxon>Taphrinomycotina</taxon>
        <taxon>Schizosaccharomycetes</taxon>
        <taxon>Schizosaccharomycetales</taxon>
        <taxon>Schizosaccharomycetaceae</taxon>
        <taxon>Schizosaccharomyces</taxon>
    </lineage>
</organism>
<feature type="chain" id="PRO_0000416506" description="Uncharacterized protein new12">
    <location>
        <begin position="1"/>
        <end position="93"/>
    </location>
</feature>
<feature type="domain" description="Sm" evidence="2">
    <location>
        <begin position="1"/>
        <end position="76"/>
    </location>
</feature>
<sequence length="93" mass="10623">MDSHTTEKRRGSYLRVLFKNGRLPVEGFLWNCDPLTGTLILIQPLTPNTDEVEDTHYRFYGIMSDAIQTIEPDESMSPLNQQSLAEYDSLLTS</sequence>
<protein>
    <recommendedName>
        <fullName>Uncharacterized protein new12</fullName>
    </recommendedName>
</protein>